<comment type="function">
    <text evidence="1">Forms part of the ribosomal stalk which helps the ribosome interact with GTP-bound translation factors. Is thus essential for accurate translation.</text>
</comment>
<comment type="subunit">
    <text evidence="1">Homodimer. Part of the ribosomal stalk of the 50S ribosomal subunit. Forms a multimeric L10(L12)X complex, where L10 forms an elongated spine to which 2 to 4 L12 dimers bind in a sequential fashion. Binds GTP-bound translation factors.</text>
</comment>
<comment type="similarity">
    <text evidence="1">Belongs to the bacterial ribosomal protein bL12 family.</text>
</comment>
<organism>
    <name type="scientific">Helicobacter pylori (strain G27)</name>
    <dbReference type="NCBI Taxonomy" id="563041"/>
    <lineage>
        <taxon>Bacteria</taxon>
        <taxon>Pseudomonadati</taxon>
        <taxon>Campylobacterota</taxon>
        <taxon>Epsilonproteobacteria</taxon>
        <taxon>Campylobacterales</taxon>
        <taxon>Helicobacteraceae</taxon>
        <taxon>Helicobacter</taxon>
    </lineage>
</organism>
<accession>B5Z8J6</accession>
<name>RL7_HELPG</name>
<proteinExistence type="inferred from homology"/>
<protein>
    <recommendedName>
        <fullName evidence="1">Large ribosomal subunit protein bL12</fullName>
    </recommendedName>
    <alternativeName>
        <fullName evidence="2">50S ribosomal protein L7/L12</fullName>
    </alternativeName>
</protein>
<gene>
    <name evidence="1" type="primary">rplL</name>
    <name type="ordered locus">HPG27_1145</name>
</gene>
<evidence type="ECO:0000255" key="1">
    <source>
        <dbReference type="HAMAP-Rule" id="MF_00368"/>
    </source>
</evidence>
<evidence type="ECO:0000305" key="2"/>
<reference key="1">
    <citation type="journal article" date="2009" name="J. Bacteriol.">
        <title>The complete genome sequence of Helicobacter pylori strain G27.</title>
        <authorList>
            <person name="Baltrus D.A."/>
            <person name="Amieva M.R."/>
            <person name="Covacci A."/>
            <person name="Lowe T.M."/>
            <person name="Merrell D.S."/>
            <person name="Ottemann K.M."/>
            <person name="Stein M."/>
            <person name="Salama N.R."/>
            <person name="Guillemin K."/>
        </authorList>
    </citation>
    <scope>NUCLEOTIDE SEQUENCE [LARGE SCALE GENOMIC DNA]</scope>
    <source>
        <strain>G27</strain>
    </source>
</reference>
<keyword id="KW-1185">Reference proteome</keyword>
<keyword id="KW-0687">Ribonucleoprotein</keyword>
<keyword id="KW-0689">Ribosomal protein</keyword>
<sequence>MAISKEEVLEYIGSLSVLELAELVKMFEEKFGVSATPTVVAGAAVAGGAAAESEEKTEFNVILADSGAEKIKVIKVVREITGLGLKEAKDATEKTPHVLKEGVNKEEAETIKKKLEEVGAKVEVK</sequence>
<dbReference type="EMBL" id="CP001173">
    <property type="protein sequence ID" value="ACI27895.1"/>
    <property type="molecule type" value="Genomic_DNA"/>
</dbReference>
<dbReference type="RefSeq" id="WP_001018219.1">
    <property type="nucleotide sequence ID" value="NC_011333.1"/>
</dbReference>
<dbReference type="SMR" id="B5Z8J6"/>
<dbReference type="KEGG" id="hpg:HPG27_1145"/>
<dbReference type="HOGENOM" id="CLU_086499_3_2_7"/>
<dbReference type="Proteomes" id="UP000001735">
    <property type="component" value="Chromosome"/>
</dbReference>
<dbReference type="GO" id="GO:0022625">
    <property type="term" value="C:cytosolic large ribosomal subunit"/>
    <property type="evidence" value="ECO:0007669"/>
    <property type="project" value="TreeGrafter"/>
</dbReference>
<dbReference type="GO" id="GO:0003729">
    <property type="term" value="F:mRNA binding"/>
    <property type="evidence" value="ECO:0007669"/>
    <property type="project" value="TreeGrafter"/>
</dbReference>
<dbReference type="GO" id="GO:0003735">
    <property type="term" value="F:structural constituent of ribosome"/>
    <property type="evidence" value="ECO:0007669"/>
    <property type="project" value="InterPro"/>
</dbReference>
<dbReference type="GO" id="GO:0006412">
    <property type="term" value="P:translation"/>
    <property type="evidence" value="ECO:0007669"/>
    <property type="project" value="UniProtKB-UniRule"/>
</dbReference>
<dbReference type="CDD" id="cd00387">
    <property type="entry name" value="Ribosomal_L7_L12"/>
    <property type="match status" value="1"/>
</dbReference>
<dbReference type="FunFam" id="1.20.5.710:FF:000004">
    <property type="entry name" value="50S ribosomal protein L7/L12"/>
    <property type="match status" value="1"/>
</dbReference>
<dbReference type="FunFam" id="3.30.1390.10:FF:000001">
    <property type="entry name" value="50S ribosomal protein L7/L12"/>
    <property type="match status" value="1"/>
</dbReference>
<dbReference type="Gene3D" id="3.30.1390.10">
    <property type="match status" value="1"/>
</dbReference>
<dbReference type="Gene3D" id="1.20.5.710">
    <property type="entry name" value="Single helix bin"/>
    <property type="match status" value="1"/>
</dbReference>
<dbReference type="HAMAP" id="MF_00368">
    <property type="entry name" value="Ribosomal_bL12"/>
    <property type="match status" value="1"/>
</dbReference>
<dbReference type="InterPro" id="IPR000206">
    <property type="entry name" value="Ribosomal_bL12"/>
</dbReference>
<dbReference type="InterPro" id="IPR013823">
    <property type="entry name" value="Ribosomal_bL12_C"/>
</dbReference>
<dbReference type="InterPro" id="IPR014719">
    <property type="entry name" value="Ribosomal_bL12_C/ClpS-like"/>
</dbReference>
<dbReference type="InterPro" id="IPR008932">
    <property type="entry name" value="Ribosomal_bL12_oligo"/>
</dbReference>
<dbReference type="InterPro" id="IPR036235">
    <property type="entry name" value="Ribosomal_bL12_oligo_N_sf"/>
</dbReference>
<dbReference type="NCBIfam" id="TIGR00855">
    <property type="entry name" value="L12"/>
    <property type="match status" value="1"/>
</dbReference>
<dbReference type="PANTHER" id="PTHR45987">
    <property type="entry name" value="39S RIBOSOMAL PROTEIN L12"/>
    <property type="match status" value="1"/>
</dbReference>
<dbReference type="PANTHER" id="PTHR45987:SF4">
    <property type="entry name" value="LARGE RIBOSOMAL SUBUNIT PROTEIN BL12M"/>
    <property type="match status" value="1"/>
</dbReference>
<dbReference type="Pfam" id="PF00542">
    <property type="entry name" value="Ribosomal_L12"/>
    <property type="match status" value="1"/>
</dbReference>
<dbReference type="Pfam" id="PF16320">
    <property type="entry name" value="Ribosomal_L12_N"/>
    <property type="match status" value="1"/>
</dbReference>
<dbReference type="SUPFAM" id="SSF54736">
    <property type="entry name" value="ClpS-like"/>
    <property type="match status" value="1"/>
</dbReference>
<dbReference type="SUPFAM" id="SSF48300">
    <property type="entry name" value="Ribosomal protein L7/12, oligomerisation (N-terminal) domain"/>
    <property type="match status" value="1"/>
</dbReference>
<feature type="chain" id="PRO_1000121446" description="Large ribosomal subunit protein bL12">
    <location>
        <begin position="1"/>
        <end position="125"/>
    </location>
</feature>